<organism>
    <name type="scientific">Yersinia enterocolitica serotype O:8 / biotype 1B (strain NCTC 13174 / 8081)</name>
    <dbReference type="NCBI Taxonomy" id="393305"/>
    <lineage>
        <taxon>Bacteria</taxon>
        <taxon>Pseudomonadati</taxon>
        <taxon>Pseudomonadota</taxon>
        <taxon>Gammaproteobacteria</taxon>
        <taxon>Enterobacterales</taxon>
        <taxon>Yersiniaceae</taxon>
        <taxon>Yersinia</taxon>
    </lineage>
</organism>
<comment type="function">
    <text evidence="1">Catalyzes the formation of sulfite from phosphoadenosine 5'-phosphosulfate (PAPS) using thioredoxin as an electron donor.</text>
</comment>
<comment type="catalytic activity">
    <reaction evidence="1">
        <text>[thioredoxin]-disulfide + sulfite + adenosine 3',5'-bisphosphate + 2 H(+) = [thioredoxin]-dithiol + 3'-phosphoadenylyl sulfate</text>
        <dbReference type="Rhea" id="RHEA:11724"/>
        <dbReference type="Rhea" id="RHEA-COMP:10698"/>
        <dbReference type="Rhea" id="RHEA-COMP:10700"/>
        <dbReference type="ChEBI" id="CHEBI:15378"/>
        <dbReference type="ChEBI" id="CHEBI:17359"/>
        <dbReference type="ChEBI" id="CHEBI:29950"/>
        <dbReference type="ChEBI" id="CHEBI:50058"/>
        <dbReference type="ChEBI" id="CHEBI:58339"/>
        <dbReference type="ChEBI" id="CHEBI:58343"/>
        <dbReference type="EC" id="1.8.4.8"/>
    </reaction>
</comment>
<comment type="pathway">
    <text evidence="1">Sulfur metabolism; hydrogen sulfide biosynthesis; sulfite from sulfate: step 3/3.</text>
</comment>
<comment type="subcellular location">
    <subcellularLocation>
        <location evidence="1">Cytoplasm</location>
    </subcellularLocation>
</comment>
<comment type="similarity">
    <text evidence="1">Belongs to the PAPS reductase family. CysH subfamily.</text>
</comment>
<evidence type="ECO:0000255" key="1">
    <source>
        <dbReference type="HAMAP-Rule" id="MF_00063"/>
    </source>
</evidence>
<name>CYSH_YERE8</name>
<gene>
    <name evidence="1" type="primary">cysH</name>
    <name type="ordered locus">YE0757</name>
</gene>
<accession>A1JJS4</accession>
<reference key="1">
    <citation type="journal article" date="2006" name="PLoS Genet.">
        <title>The complete genome sequence and comparative genome analysis of the high pathogenicity Yersinia enterocolitica strain 8081.</title>
        <authorList>
            <person name="Thomson N.R."/>
            <person name="Howard S."/>
            <person name="Wren B.W."/>
            <person name="Holden M.T.G."/>
            <person name="Crossman L."/>
            <person name="Challis G.L."/>
            <person name="Churcher C."/>
            <person name="Mungall K."/>
            <person name="Brooks K."/>
            <person name="Chillingworth T."/>
            <person name="Feltwell T."/>
            <person name="Abdellah Z."/>
            <person name="Hauser H."/>
            <person name="Jagels K."/>
            <person name="Maddison M."/>
            <person name="Moule S."/>
            <person name="Sanders M."/>
            <person name="Whitehead S."/>
            <person name="Quail M.A."/>
            <person name="Dougan G."/>
            <person name="Parkhill J."/>
            <person name="Prentice M.B."/>
        </authorList>
    </citation>
    <scope>NUCLEOTIDE SEQUENCE [LARGE SCALE GENOMIC DNA]</scope>
    <source>
        <strain>NCTC 13174 / 8081</strain>
    </source>
</reference>
<dbReference type="EC" id="1.8.4.8" evidence="1"/>
<dbReference type="EMBL" id="AM286415">
    <property type="protein sequence ID" value="CAL10861.1"/>
    <property type="molecule type" value="Genomic_DNA"/>
</dbReference>
<dbReference type="RefSeq" id="WP_005167272.1">
    <property type="nucleotide sequence ID" value="NC_008800.1"/>
</dbReference>
<dbReference type="RefSeq" id="YP_001005101.1">
    <property type="nucleotide sequence ID" value="NC_008800.1"/>
</dbReference>
<dbReference type="SMR" id="A1JJS4"/>
<dbReference type="KEGG" id="yen:YE0757"/>
<dbReference type="PATRIC" id="fig|393305.7.peg.851"/>
<dbReference type="eggNOG" id="COG0175">
    <property type="taxonomic scope" value="Bacteria"/>
</dbReference>
<dbReference type="HOGENOM" id="CLU_044089_3_0_6"/>
<dbReference type="OrthoDB" id="9794018at2"/>
<dbReference type="UniPathway" id="UPA00140">
    <property type="reaction ID" value="UER00206"/>
</dbReference>
<dbReference type="Proteomes" id="UP000000642">
    <property type="component" value="Chromosome"/>
</dbReference>
<dbReference type="GO" id="GO:0005737">
    <property type="term" value="C:cytoplasm"/>
    <property type="evidence" value="ECO:0007669"/>
    <property type="project" value="UniProtKB-SubCell"/>
</dbReference>
<dbReference type="GO" id="GO:0004604">
    <property type="term" value="F:phosphoadenylyl-sulfate reductase (thioredoxin) activity"/>
    <property type="evidence" value="ECO:0007669"/>
    <property type="project" value="UniProtKB-UniRule"/>
</dbReference>
<dbReference type="GO" id="GO:0070814">
    <property type="term" value="P:hydrogen sulfide biosynthetic process"/>
    <property type="evidence" value="ECO:0007669"/>
    <property type="project" value="UniProtKB-UniRule"/>
</dbReference>
<dbReference type="GO" id="GO:0019379">
    <property type="term" value="P:sulfate assimilation, phosphoadenylyl sulfate reduction by phosphoadenylyl-sulfate reductase (thioredoxin)"/>
    <property type="evidence" value="ECO:0007669"/>
    <property type="project" value="UniProtKB-UniRule"/>
</dbReference>
<dbReference type="CDD" id="cd23945">
    <property type="entry name" value="PAPS_reductase"/>
    <property type="match status" value="1"/>
</dbReference>
<dbReference type="FunFam" id="3.40.50.620:FF:000043">
    <property type="entry name" value="Phosphoadenosine phosphosulfate reductase"/>
    <property type="match status" value="1"/>
</dbReference>
<dbReference type="Gene3D" id="3.40.50.620">
    <property type="entry name" value="HUPs"/>
    <property type="match status" value="1"/>
</dbReference>
<dbReference type="HAMAP" id="MF_00063">
    <property type="entry name" value="CysH"/>
    <property type="match status" value="1"/>
</dbReference>
<dbReference type="InterPro" id="IPR004511">
    <property type="entry name" value="PAPS/APS_Rdtase"/>
</dbReference>
<dbReference type="InterPro" id="IPR002500">
    <property type="entry name" value="PAPS_reduct_dom"/>
</dbReference>
<dbReference type="InterPro" id="IPR011800">
    <property type="entry name" value="PAPS_reductase_CysH"/>
</dbReference>
<dbReference type="InterPro" id="IPR014729">
    <property type="entry name" value="Rossmann-like_a/b/a_fold"/>
</dbReference>
<dbReference type="NCBIfam" id="TIGR00434">
    <property type="entry name" value="cysH"/>
    <property type="match status" value="1"/>
</dbReference>
<dbReference type="NCBIfam" id="TIGR02057">
    <property type="entry name" value="PAPS_reductase"/>
    <property type="match status" value="1"/>
</dbReference>
<dbReference type="NCBIfam" id="NF002537">
    <property type="entry name" value="PRK02090.1"/>
    <property type="match status" value="1"/>
</dbReference>
<dbReference type="PANTHER" id="PTHR46509">
    <property type="entry name" value="PHOSPHOADENOSINE PHOSPHOSULFATE REDUCTASE"/>
    <property type="match status" value="1"/>
</dbReference>
<dbReference type="PANTHER" id="PTHR46509:SF1">
    <property type="entry name" value="PHOSPHOADENOSINE PHOSPHOSULFATE REDUCTASE"/>
    <property type="match status" value="1"/>
</dbReference>
<dbReference type="Pfam" id="PF01507">
    <property type="entry name" value="PAPS_reduct"/>
    <property type="match status" value="1"/>
</dbReference>
<dbReference type="PIRSF" id="PIRSF000857">
    <property type="entry name" value="PAPS_reductase"/>
    <property type="match status" value="1"/>
</dbReference>
<dbReference type="SUPFAM" id="SSF52402">
    <property type="entry name" value="Adenine nucleotide alpha hydrolases-like"/>
    <property type="match status" value="1"/>
</dbReference>
<feature type="chain" id="PRO_1000008947" description="Phosphoadenosine 5'-phosphosulfate reductase">
    <location>
        <begin position="1"/>
        <end position="244"/>
    </location>
</feature>
<feature type="active site" description="Nucleophile; cysteine thiosulfonate intermediate" evidence="1">
    <location>
        <position position="239"/>
    </location>
</feature>
<protein>
    <recommendedName>
        <fullName evidence="1">Phosphoadenosine 5'-phosphosulfate reductase</fullName>
        <shortName evidence="1">PAPS reductase</shortName>
        <ecNumber evidence="1">1.8.4.8</ecNumber>
    </recommendedName>
    <alternativeName>
        <fullName evidence="1">3'-phosphoadenylylsulfate reductase</fullName>
    </alternativeName>
    <alternativeName>
        <fullName evidence="1">PAPS reductase, thioredoxin dependent</fullName>
    </alternativeName>
    <alternativeName>
        <fullName evidence="1">PAPS sulfotransferase</fullName>
    </alternativeName>
    <alternativeName>
        <fullName evidence="1">PAdoPS reductase</fullName>
    </alternativeName>
</protein>
<keyword id="KW-0963">Cytoplasm</keyword>
<keyword id="KW-0560">Oxidoreductase</keyword>
<proteinExistence type="inferred from homology"/>
<sequence>MSQFNLNELNALPKAEQAAALALVNGQLEHLTAQERVSWALENLPGEFVLSSSFGIQAAVCLHLVTRQQPDIPVILTDTGYLFPETYQFIDSLTEKLQLNLQVFRAQQSPAWQEARYGKLWEQGVEGIERYNDLNKVEPMNRALETLGAQTWFAGLRREQSGSRAKLPVLAIARGVFKLLPIIDWDNRQVYQYLTQHGLSYHPLWEQGYLSVGDTHTTRKWEPGMSEEETRFFGLKRECGLHES</sequence>